<accession>A6WXS2</accession>
<evidence type="ECO:0000255" key="1">
    <source>
        <dbReference type="HAMAP-Rule" id="MF_00412"/>
    </source>
</evidence>
<protein>
    <recommendedName>
        <fullName evidence="1">Gamma-glutamyl phosphate reductase</fullName>
        <shortName evidence="1">GPR</shortName>
        <ecNumber evidence="1">1.2.1.41</ecNumber>
    </recommendedName>
    <alternativeName>
        <fullName evidence="1">Glutamate-5-semialdehyde dehydrogenase</fullName>
    </alternativeName>
    <alternativeName>
        <fullName evidence="1">Glutamyl-gamma-semialdehyde dehydrogenase</fullName>
        <shortName evidence="1">GSA dehydrogenase</shortName>
    </alternativeName>
</protein>
<comment type="function">
    <text evidence="1">Catalyzes the NADPH-dependent reduction of L-glutamate 5-phosphate into L-glutamate 5-semialdehyde and phosphate. The product spontaneously undergoes cyclization to form 1-pyrroline-5-carboxylate.</text>
</comment>
<comment type="catalytic activity">
    <reaction evidence="1">
        <text>L-glutamate 5-semialdehyde + phosphate + NADP(+) = L-glutamyl 5-phosphate + NADPH + H(+)</text>
        <dbReference type="Rhea" id="RHEA:19541"/>
        <dbReference type="ChEBI" id="CHEBI:15378"/>
        <dbReference type="ChEBI" id="CHEBI:43474"/>
        <dbReference type="ChEBI" id="CHEBI:57783"/>
        <dbReference type="ChEBI" id="CHEBI:58066"/>
        <dbReference type="ChEBI" id="CHEBI:58274"/>
        <dbReference type="ChEBI" id="CHEBI:58349"/>
        <dbReference type="EC" id="1.2.1.41"/>
    </reaction>
</comment>
<comment type="pathway">
    <text evidence="1">Amino-acid biosynthesis; L-proline biosynthesis; L-glutamate 5-semialdehyde from L-glutamate: step 2/2.</text>
</comment>
<comment type="subcellular location">
    <subcellularLocation>
        <location evidence="1">Cytoplasm</location>
    </subcellularLocation>
</comment>
<comment type="similarity">
    <text evidence="1">Belongs to the gamma-glutamyl phosphate reductase family.</text>
</comment>
<organism>
    <name type="scientific">Brucella anthropi (strain ATCC 49188 / DSM 6882 / CCUG 24695 / JCM 21032 / LMG 3331 / NBRC 15819 / NCTC 12168 / Alc 37)</name>
    <name type="common">Ochrobactrum anthropi</name>
    <dbReference type="NCBI Taxonomy" id="439375"/>
    <lineage>
        <taxon>Bacteria</taxon>
        <taxon>Pseudomonadati</taxon>
        <taxon>Pseudomonadota</taxon>
        <taxon>Alphaproteobacteria</taxon>
        <taxon>Hyphomicrobiales</taxon>
        <taxon>Brucellaceae</taxon>
        <taxon>Brucella/Ochrobactrum group</taxon>
        <taxon>Brucella</taxon>
    </lineage>
</organism>
<proteinExistence type="inferred from homology"/>
<sequence>MLTKAETANDIAAVMAEVGRKARAAAAPLSIATTEQKNRALIAAADAMLEARGDILEANKLDLANAEKNGMAASFVDRLALDDGRISAIADGIRAIAALPDPVGEVIAEWDRPNGLHIERVRTPLGVIGVIYESRPNVTADAGALCLKAGNAVILRGGSDSAHSSAAIHKALVRGLEAAGLPADAIQIVPVTDRAAVGEMLKGLDGAIDVIVPRGGKSLVARVQSEARVPVFAHLEGICHLYIDKSADLDMARKIAVDAKMRRTGICGAAETLLVDRAAAAMHLVPILEDLAAKSCEIRGSADVLALYPAAKPATEEDWSTEYLDAIISVALVDGISGAIEHINRYSSHHTEAVVAEDAAAVARFFNEIDSAILLHNASTQFADGGEFGMGAEIGIATGKMHARGPVGVEQLTSFKYRVRGDGQIRG</sequence>
<keyword id="KW-0028">Amino-acid biosynthesis</keyword>
<keyword id="KW-0963">Cytoplasm</keyword>
<keyword id="KW-0521">NADP</keyword>
<keyword id="KW-0560">Oxidoreductase</keyword>
<keyword id="KW-0641">Proline biosynthesis</keyword>
<keyword id="KW-1185">Reference proteome</keyword>
<gene>
    <name evidence="1" type="primary">proA</name>
    <name type="ordered locus">Oant_1056</name>
</gene>
<dbReference type="EC" id="1.2.1.41" evidence="1"/>
<dbReference type="EMBL" id="CP000758">
    <property type="protein sequence ID" value="ABS13776.1"/>
    <property type="molecule type" value="Genomic_DNA"/>
</dbReference>
<dbReference type="RefSeq" id="WP_012091224.1">
    <property type="nucleotide sequence ID" value="NC_009667.1"/>
</dbReference>
<dbReference type="SMR" id="A6WXS2"/>
<dbReference type="STRING" id="439375.Oant_1056"/>
<dbReference type="KEGG" id="oan:Oant_1056"/>
<dbReference type="PATRIC" id="fig|439375.7.peg.1104"/>
<dbReference type="eggNOG" id="COG0014">
    <property type="taxonomic scope" value="Bacteria"/>
</dbReference>
<dbReference type="HOGENOM" id="CLU_030231_0_0_5"/>
<dbReference type="PhylomeDB" id="A6WXS2"/>
<dbReference type="UniPathway" id="UPA00098">
    <property type="reaction ID" value="UER00360"/>
</dbReference>
<dbReference type="Proteomes" id="UP000002301">
    <property type="component" value="Chromosome 1"/>
</dbReference>
<dbReference type="GO" id="GO:0005737">
    <property type="term" value="C:cytoplasm"/>
    <property type="evidence" value="ECO:0007669"/>
    <property type="project" value="UniProtKB-SubCell"/>
</dbReference>
<dbReference type="GO" id="GO:0004350">
    <property type="term" value="F:glutamate-5-semialdehyde dehydrogenase activity"/>
    <property type="evidence" value="ECO:0007669"/>
    <property type="project" value="UniProtKB-UniRule"/>
</dbReference>
<dbReference type="GO" id="GO:0050661">
    <property type="term" value="F:NADP binding"/>
    <property type="evidence" value="ECO:0007669"/>
    <property type="project" value="InterPro"/>
</dbReference>
<dbReference type="GO" id="GO:0055129">
    <property type="term" value="P:L-proline biosynthetic process"/>
    <property type="evidence" value="ECO:0007669"/>
    <property type="project" value="UniProtKB-UniRule"/>
</dbReference>
<dbReference type="CDD" id="cd07079">
    <property type="entry name" value="ALDH_F18-19_ProA-GPR"/>
    <property type="match status" value="1"/>
</dbReference>
<dbReference type="Gene3D" id="3.40.605.10">
    <property type="entry name" value="Aldehyde Dehydrogenase, Chain A, domain 1"/>
    <property type="match status" value="1"/>
</dbReference>
<dbReference type="Gene3D" id="3.40.309.10">
    <property type="entry name" value="Aldehyde Dehydrogenase, Chain A, domain 2"/>
    <property type="match status" value="1"/>
</dbReference>
<dbReference type="HAMAP" id="MF_00412">
    <property type="entry name" value="ProA"/>
    <property type="match status" value="1"/>
</dbReference>
<dbReference type="InterPro" id="IPR016161">
    <property type="entry name" value="Ald_DH/histidinol_DH"/>
</dbReference>
<dbReference type="InterPro" id="IPR016163">
    <property type="entry name" value="Ald_DH_C"/>
</dbReference>
<dbReference type="InterPro" id="IPR016162">
    <property type="entry name" value="Ald_DH_N"/>
</dbReference>
<dbReference type="InterPro" id="IPR015590">
    <property type="entry name" value="Aldehyde_DH_dom"/>
</dbReference>
<dbReference type="InterPro" id="IPR012134">
    <property type="entry name" value="Glu-5-SA_DH"/>
</dbReference>
<dbReference type="InterPro" id="IPR000965">
    <property type="entry name" value="GPR_dom"/>
</dbReference>
<dbReference type="NCBIfam" id="NF001221">
    <property type="entry name" value="PRK00197.1"/>
    <property type="match status" value="1"/>
</dbReference>
<dbReference type="NCBIfam" id="TIGR00407">
    <property type="entry name" value="proA"/>
    <property type="match status" value="1"/>
</dbReference>
<dbReference type="PANTHER" id="PTHR11063:SF8">
    <property type="entry name" value="DELTA-1-PYRROLINE-5-CARBOXYLATE SYNTHASE"/>
    <property type="match status" value="1"/>
</dbReference>
<dbReference type="PANTHER" id="PTHR11063">
    <property type="entry name" value="GLUTAMATE SEMIALDEHYDE DEHYDROGENASE"/>
    <property type="match status" value="1"/>
</dbReference>
<dbReference type="Pfam" id="PF00171">
    <property type="entry name" value="Aldedh"/>
    <property type="match status" value="1"/>
</dbReference>
<dbReference type="PIRSF" id="PIRSF000151">
    <property type="entry name" value="GPR"/>
    <property type="match status" value="1"/>
</dbReference>
<dbReference type="SUPFAM" id="SSF53720">
    <property type="entry name" value="ALDH-like"/>
    <property type="match status" value="1"/>
</dbReference>
<reference key="1">
    <citation type="journal article" date="2011" name="J. Bacteriol.">
        <title>Genome of Ochrobactrum anthropi ATCC 49188 T, a versatile opportunistic pathogen and symbiont of several eukaryotic hosts.</title>
        <authorList>
            <person name="Chain P.S."/>
            <person name="Lang D.M."/>
            <person name="Comerci D.J."/>
            <person name="Malfatti S.A."/>
            <person name="Vergez L.M."/>
            <person name="Shin M."/>
            <person name="Ugalde R.A."/>
            <person name="Garcia E."/>
            <person name="Tolmasky M.E."/>
        </authorList>
    </citation>
    <scope>NUCLEOTIDE SEQUENCE [LARGE SCALE GENOMIC DNA]</scope>
    <source>
        <strain>ATCC 49188 / DSM 6882 / CCUG 24695 / JCM 21032 / LMG 3331 / NBRC 15819 / NCTC 12168 / Alc 37</strain>
    </source>
</reference>
<feature type="chain" id="PRO_1000049973" description="Gamma-glutamyl phosphate reductase">
    <location>
        <begin position="1"/>
        <end position="427"/>
    </location>
</feature>
<name>PROA_BRUA4</name>